<name>TX1AB_MYRPI</name>
<comment type="function">
    <text evidence="3 5 6">Has strong cytotoxic and hemolytic activities. Is more potent against mononuclear leukocytes than against granulocytes. The synthesized peptide 57-76 shows a potent and broad spectrum antimicrobial activity against both Gram-positive and Gram-negative bacteria, and also against the fungus C.albicans. Adopts an alpha-helical structure.</text>
</comment>
<comment type="subcellular location">
    <subcellularLocation>
        <location evidence="4">Secreted</location>
    </subcellularLocation>
</comment>
<comment type="tissue specificity">
    <text evidence="11">Expressed by the venom gland.</text>
</comment>
<comment type="mass spectrometry" mass="4938.0" method="Electrospray" evidence="2">
    <molecule>M-myrmeciitoxin-Mp1d</molecule>
</comment>
<comment type="mass spectrometry" mass="5279.0" method="Electrospray" evidence="2">
    <molecule>M-myrmeciitoxin-Mp1c</molecule>
</comment>
<comment type="mass spectrometry" mass="6052.0" method="Electrospray" evidence="2">
    <molecule>M-myrmeciitoxin-Mp1a</molecule>
</comment>
<comment type="mass spectrometry" mass="6067.0" method="Electrospray" evidence="2">
    <molecule>M-myrmeciitoxin-Mp1a</molecule>
    <text>Variant Ile-61.</text>
</comment>
<comment type="allergen">
    <text>Causes an allergic reaction in human. Binds to IgE.</text>
</comment>
<comment type="similarity">
    <text evidence="10">Belongs to the formicidae venom precursor-01 superfamily. Ant pilosulin family.</text>
</comment>
<sequence length="112" mass="11849">MKLSCLLLTLTIIFVLTIVHAPNVEAKDLADPESEAVGFADAFGEADAVGEADPNAGLGSVFGRLARILGRVIPKVAKKLGPKVAKVLPKVMKEAIPMAVEMAKSQEEQQPQ</sequence>
<proteinExistence type="evidence at protein level"/>
<keyword id="KW-0002">3D-structure</keyword>
<keyword id="KW-0020">Allergen</keyword>
<keyword id="KW-0044">Antibiotic</keyword>
<keyword id="KW-0929">Antimicrobial</keyword>
<keyword id="KW-0204">Cytolysis</keyword>
<keyword id="KW-0903">Direct protein sequencing</keyword>
<keyword id="KW-0295">Fungicide</keyword>
<keyword id="KW-0354">Hemolysis</keyword>
<keyword id="KW-0964">Secreted</keyword>
<keyword id="KW-0732">Signal</keyword>
<reference key="1">
    <citation type="journal article" date="1993" name="Biochim. Biophys. Acta">
        <title>Molecular cloning and characterization of a major allergen (Myr p I) from the venom of the Australian jumper ant, Myrmecia pilosula.</title>
        <authorList>
            <person name="Donovan G.R."/>
            <person name="Baldo B.A."/>
            <person name="Sutherland S.K."/>
        </authorList>
    </citation>
    <scope>NUCLEOTIDE SEQUENCE [MRNA]</scope>
    <source>
        <tissue>Venom gland</tissue>
    </source>
</reference>
<reference key="2">
    <citation type="journal article" date="1996" name="Biochem. Mol. Biol. Int.">
        <title>Expression of jumper ant (Myrmecia pilosula) venom allergens: post-translational processing of allergen gene products.</title>
        <authorList>
            <person name="Donovan G.R."/>
            <person name="Street M.D."/>
            <person name="Tetaz T."/>
            <person name="Smith A.I."/>
            <person name="Alewood D."/>
            <person name="Alewood P.F."/>
            <person name="Sutherland S.K."/>
            <person name="Baldo B.A."/>
        </authorList>
    </citation>
    <scope>PROTEIN SEQUENCE OF 57-112; 65-112; 68-112; 71-112 AND 86-112</scope>
    <scope>SUBCELLULAR LOCATION</scope>
    <source>
        <tissue>Venom</tissue>
    </source>
</reference>
<reference key="3">
    <citation type="journal article" date="2004" name="Toxicon">
        <title>Characterisation of major peptides in 'jack jumper' ant venom by mass spectrometry.</title>
        <authorList>
            <person name="Davies N.W."/>
            <person name="Wiese M.D."/>
            <person name="Brown S.G.A."/>
        </authorList>
    </citation>
    <scope>PROTEIN SEQUENCE OF 57-66 (VARIANT)</scope>
    <scope>MASS SPECTROMETRY</scope>
    <source>
        <tissue>Venom</tissue>
    </source>
</reference>
<reference key="4">
    <citation type="journal article" date="1996" name="Biochim. Biophys. Acta">
        <title>Molecular cloning and characterization of the major allergen Myr p II from the venom of the jumper ant Myrmecia pilosula: Myr p I and Myr p II share a common protein leader sequence.</title>
        <authorList>
            <person name="Street M.D."/>
            <person name="Donovan G.R."/>
            <person name="Baldo B.A."/>
        </authorList>
    </citation>
    <scope>PROTEIN SEQUENCE OF 68-83</scope>
    <source>
        <tissue>Venom</tissue>
    </source>
</reference>
<reference key="5">
    <citation type="journal article" date="1998" name="Biochim. Biophys. Acta">
        <title>Cytotoxicity of pilosulin 1, a peptide from the venom of the jumper ant Myrmecia pilosula.</title>
        <authorList>
            <person name="Wu Q.-X."/>
            <person name="King M.A."/>
            <person name="Donovan G.R."/>
            <person name="Alewood D."/>
            <person name="Alewood P.F."/>
            <person name="Sawyer W.H."/>
            <person name="Baldo B.A."/>
        </authorList>
    </citation>
    <scope>FUNCTION</scope>
    <scope>SYNTHESIS OF 57-78; 57-112; 67-112; 79-112; 93-112 AND 103-112</scope>
</reference>
<reference key="6">
    <citation type="journal article" date="1998" name="Cytometry">
        <title>Flow cytometric analysis of cell killing by the jumper ant venom peptide pilosulin 1.</title>
        <authorList>
            <person name="King M.A."/>
            <person name="Wu Q.-X."/>
            <person name="Donovan G.R."/>
            <person name="Baldo B.A."/>
        </authorList>
    </citation>
    <scope>FUNCTION</scope>
    <scope>SYNTHESIS OF 57-112</scope>
</reference>
<reference key="7">
    <citation type="journal article" date="2005" name="Arch. Biochem. Biophys.">
        <title>Identification and optimization of an antimicrobial peptide from the ant venom toxin pilosulin.</title>
        <authorList>
            <person name="Zelezetsky I."/>
            <person name="Pag U."/>
            <person name="Antcheva N."/>
            <person name="Sahl H.-G."/>
            <person name="Tossi A."/>
        </authorList>
    </citation>
    <scope>FUNCTION</scope>
    <scope>SYNTHESIS OF 57-76</scope>
</reference>
<reference key="8">
    <citation type="journal article" date="1994" name="Biochim. Biophys. Acta">
        <title>Identification of an IgE-binding determinant of the major allergen Myr p I from the venom of the Australian jumper ant Myrmecia pilosula.</title>
        <authorList>
            <person name="Donovan G.R."/>
            <person name="Street M.D."/>
            <person name="Baldo B.A."/>
            <person name="Alewood D."/>
            <person name="Alewood P.F."/>
            <person name="Sutherland S.K."/>
        </authorList>
    </citation>
    <scope>SYNTHESIS OF 67-112; 79-112; 87-112; 93-112; 95-112; 97-112; 99-112 101-112; 93-100; 93-102; 93-104 AND 93-106</scope>
    <scope>IGE-BINDING DETERMINANT</scope>
</reference>
<reference key="9">
    <citation type="journal article" date="2016" name="Toxins">
        <title>The biochemical toxin arsenal from ant venoms.</title>
        <authorList>
            <person name="Touchard A."/>
            <person name="Aili S.R."/>
            <person name="Fox E.G."/>
            <person name="Escoubas P."/>
            <person name="Orivel J."/>
            <person name="Nicholson G.M."/>
            <person name="Dejean A."/>
        </authorList>
    </citation>
    <scope>REVIEW</scope>
    <scope>NOMENCLATURE</scope>
</reference>
<dbReference type="EMBL" id="X70256">
    <property type="protein sequence ID" value="CAA49760.1"/>
    <property type="molecule type" value="mRNA"/>
</dbReference>
<dbReference type="PIR" id="S28180">
    <property type="entry name" value="S28180"/>
</dbReference>
<dbReference type="PIR" id="S65709">
    <property type="entry name" value="S65709"/>
</dbReference>
<dbReference type="PDB" id="5X3L">
    <property type="method" value="NMR"/>
    <property type="chains" value="A=57-76"/>
</dbReference>
<dbReference type="PDBsum" id="5X3L"/>
<dbReference type="SMR" id="Q07932"/>
<dbReference type="Allergome" id="3380">
    <property type="allergen name" value="Myr p 1.0101"/>
</dbReference>
<dbReference type="Allergome" id="480">
    <property type="allergen name" value="Myr p 1"/>
</dbReference>
<dbReference type="TCDB" id="1.C.51.1.1">
    <property type="family name" value="the pilosulin (pilosulin) family"/>
</dbReference>
<dbReference type="GO" id="GO:0005615">
    <property type="term" value="C:extracellular space"/>
    <property type="evidence" value="ECO:0000315"/>
    <property type="project" value="CAFA"/>
</dbReference>
<dbReference type="GO" id="GO:0050832">
    <property type="term" value="P:defense response to fungus"/>
    <property type="evidence" value="ECO:0007669"/>
    <property type="project" value="UniProtKB-KW"/>
</dbReference>
<dbReference type="GO" id="GO:0050829">
    <property type="term" value="P:defense response to Gram-negative bacterium"/>
    <property type="evidence" value="ECO:0000315"/>
    <property type="project" value="CAFA"/>
</dbReference>
<dbReference type="GO" id="GO:0050830">
    <property type="term" value="P:defense response to Gram-positive bacterium"/>
    <property type="evidence" value="ECO:0000315"/>
    <property type="project" value="CAFA"/>
</dbReference>
<dbReference type="GO" id="GO:0044179">
    <property type="term" value="P:hemolysis in another organism"/>
    <property type="evidence" value="ECO:0000315"/>
    <property type="project" value="CAFA"/>
</dbReference>
<dbReference type="GO" id="GO:0001897">
    <property type="term" value="P:symbiont-mediated cytolysis of host cell"/>
    <property type="evidence" value="ECO:0000315"/>
    <property type="project" value="UniProtKB"/>
</dbReference>
<dbReference type="DisProt" id="DP00567"/>
<dbReference type="InterPro" id="IPR049518">
    <property type="entry name" value="Pilosulin"/>
</dbReference>
<dbReference type="Pfam" id="PF17499">
    <property type="entry name" value="Pilosulin"/>
    <property type="match status" value="1"/>
</dbReference>
<protein>
    <recommendedName>
        <fullName evidence="8">M-myrmeciitoxin-Mp1</fullName>
        <shortName evidence="8">M-MIITX-Mp1</shortName>
    </recommendedName>
    <alternativeName>
        <fullName>Allergen Myr p I</fullName>
    </alternativeName>
    <alternativeName>
        <fullName evidence="9">Major allergen Myr p 1</fullName>
    </alternativeName>
    <alternativeName>
        <fullName evidence="7">Pilosulin-1</fullName>
    </alternativeName>
    <allergenName>Myr p 1</allergenName>
    <component>
        <recommendedName>
            <fullName evidence="8">M-myrmeciitoxin-Mp1a</fullName>
            <shortName evidence="8">M-MIITX-Mp1a</shortName>
        </recommendedName>
        <alternativeName>
            <fullName evidence="8">M-myrmeciitoxin-Mp1b</fullName>
            <shortName evidence="8">M-MIITX-Mp1b</shortName>
        </alternativeName>
        <alternativeName>
            <fullName evidence="7">Pilosulin-1 57-&gt;112</fullName>
            <shortName evidence="7">Myr p 1 57-&gt;112</shortName>
            <shortName evidence="7">Myr p 1 57-&gt;112 (Ile5)</shortName>
        </alternativeName>
        <alternativeName>
            <fullName evidence="7">[Ile-5]pilosulin-1</fullName>
        </alternativeName>
    </component>
    <component>
        <recommendedName>
            <fullName evidence="8">M-myrmeciitoxin-Mp1c</fullName>
            <shortName evidence="8">M-MIITX-Mp1c</shortName>
        </recommendedName>
        <alternativeName>
            <fullName evidence="7">Pilosulin-1 65-&gt;112</fullName>
            <shortName evidence="7">Myr p 1 65-&gt;112</shortName>
        </alternativeName>
    </component>
    <component>
        <recommendedName>
            <fullName evidence="8">M-myrmeciitoxin-Mp1d</fullName>
            <shortName evidence="8">M-MIITX-Mp1d</shortName>
        </recommendedName>
        <alternativeName>
            <fullName evidence="7">Pilosulin-1 68-&gt;112</fullName>
            <shortName evidence="7">Myr p 1 68-&gt;112</shortName>
        </alternativeName>
    </component>
    <component>
        <recommendedName>
            <fullName evidence="8">M-myrmeciitoxin-Mp1e</fullName>
            <shortName evidence="8">M-MIITX-Mp1e</shortName>
        </recommendedName>
        <alternativeName>
            <fullName evidence="7">Pilosulin-1 71-&gt;112</fullName>
            <shortName evidence="7">Myr p 1 71-&gt;112</shortName>
        </alternativeName>
    </component>
    <component>
        <recommendedName>
            <fullName evidence="8">U1-myrmeciitoxin-Mp1f</fullName>
            <shortName evidence="8">U1-MIITX-Mp1f</shortName>
        </recommendedName>
        <alternativeName>
            <fullName evidence="7">Pilosulin-1 86-&gt;112</fullName>
            <shortName evidence="7">Myr p 1 86-&gt;112</shortName>
        </alternativeName>
    </component>
</protein>
<accession>Q07932</accession>
<accession>Q9TWC1</accession>
<feature type="signal peptide" evidence="1">
    <location>
        <begin position="1"/>
        <end position="26"/>
    </location>
</feature>
<feature type="propeptide" id="PRO_0000035158" evidence="2 4">
    <location>
        <begin position="27"/>
        <end position="56"/>
    </location>
</feature>
<feature type="peptide" id="PRO_0000035159" description="M-myrmeciitoxin-Mp1a" evidence="4">
    <location>
        <begin position="57"/>
        <end position="112"/>
    </location>
</feature>
<feature type="peptide" id="PRO_0000035160" description="M-myrmeciitoxin-Mp1c" evidence="4">
    <location>
        <begin position="65"/>
        <end position="112"/>
    </location>
</feature>
<feature type="peptide" id="PRO_0000035161" description="M-myrmeciitoxin-Mp1d" evidence="4">
    <location>
        <begin position="68"/>
        <end position="112"/>
    </location>
</feature>
<feature type="peptide" id="PRO_0000035162" description="M-myrmeciitoxin-Mp1e" evidence="4">
    <location>
        <begin position="71"/>
        <end position="112"/>
    </location>
</feature>
<feature type="peptide" id="PRO_0000035163" description="U1-myrmeciitoxin-Mp1f" evidence="4">
    <location>
        <begin position="86"/>
        <end position="112"/>
    </location>
</feature>
<feature type="region of interest" description="Critical for cytotoxic activity">
    <location>
        <begin position="57"/>
        <end position="78"/>
    </location>
</feature>
<feature type="region of interest" description="IgE-binding determinant">
    <location>
        <begin position="93"/>
        <end position="106"/>
    </location>
</feature>
<feature type="sequence variant" description="M-MIITX-Mp1b.">
    <original>V</original>
    <variation>I</variation>
    <location>
        <position position="61"/>
    </location>
</feature>
<feature type="sequence conflict" description="In Ref. 4; AA sequence." evidence="10" ref="4">
    <original>PK</original>
    <variation>KT</variation>
    <location>
        <begin position="82"/>
        <end position="83"/>
    </location>
</feature>
<feature type="helix" evidence="12">
    <location>
        <begin position="62"/>
        <end position="68"/>
    </location>
</feature>
<feature type="turn" evidence="12">
    <location>
        <begin position="69"/>
        <end position="72"/>
    </location>
</feature>
<organism>
    <name type="scientific">Myrmecia pilosula</name>
    <name type="common">Jack jumper ant</name>
    <name type="synonym">Australian jumper ant</name>
    <dbReference type="NCBI Taxonomy" id="13618"/>
    <lineage>
        <taxon>Eukaryota</taxon>
        <taxon>Metazoa</taxon>
        <taxon>Ecdysozoa</taxon>
        <taxon>Arthropoda</taxon>
        <taxon>Hexapoda</taxon>
        <taxon>Insecta</taxon>
        <taxon>Pterygota</taxon>
        <taxon>Neoptera</taxon>
        <taxon>Endopterygota</taxon>
        <taxon>Hymenoptera</taxon>
        <taxon>Apocrita</taxon>
        <taxon>Aculeata</taxon>
        <taxon>Formicoidea</taxon>
        <taxon>Formicidae</taxon>
        <taxon>Myrmeciinae</taxon>
        <taxon>Myrmeciini</taxon>
        <taxon>Myrmecia</taxon>
    </lineage>
</organism>
<evidence type="ECO:0000255" key="1"/>
<evidence type="ECO:0000269" key="2">
    <source>
    </source>
</evidence>
<evidence type="ECO:0000269" key="3">
    <source>
    </source>
</evidence>
<evidence type="ECO:0000269" key="4">
    <source>
    </source>
</evidence>
<evidence type="ECO:0000269" key="5">
    <source>
    </source>
</evidence>
<evidence type="ECO:0000269" key="6">
    <source>
    </source>
</evidence>
<evidence type="ECO:0000303" key="7">
    <source>
    </source>
</evidence>
<evidence type="ECO:0000303" key="8">
    <source>
    </source>
</evidence>
<evidence type="ECO:0000303" key="9">
    <source>
    </source>
</evidence>
<evidence type="ECO:0000305" key="10"/>
<evidence type="ECO:0000305" key="11">
    <source>
    </source>
</evidence>
<evidence type="ECO:0007829" key="12">
    <source>
        <dbReference type="PDB" id="5X3L"/>
    </source>
</evidence>